<gene>
    <name evidence="1" type="primary">glgB</name>
    <name type="ordered locus">PP_4058</name>
</gene>
<evidence type="ECO:0000255" key="1">
    <source>
        <dbReference type="HAMAP-Rule" id="MF_00685"/>
    </source>
</evidence>
<reference key="1">
    <citation type="journal article" date="2002" name="Environ. Microbiol.">
        <title>Complete genome sequence and comparative analysis of the metabolically versatile Pseudomonas putida KT2440.</title>
        <authorList>
            <person name="Nelson K.E."/>
            <person name="Weinel C."/>
            <person name="Paulsen I.T."/>
            <person name="Dodson R.J."/>
            <person name="Hilbert H."/>
            <person name="Martins dos Santos V.A.P."/>
            <person name="Fouts D.E."/>
            <person name="Gill S.R."/>
            <person name="Pop M."/>
            <person name="Holmes M."/>
            <person name="Brinkac L.M."/>
            <person name="Beanan M.J."/>
            <person name="DeBoy R.T."/>
            <person name="Daugherty S.C."/>
            <person name="Kolonay J.F."/>
            <person name="Madupu R."/>
            <person name="Nelson W.C."/>
            <person name="White O."/>
            <person name="Peterson J.D."/>
            <person name="Khouri H.M."/>
            <person name="Hance I."/>
            <person name="Chris Lee P."/>
            <person name="Holtzapple E.K."/>
            <person name="Scanlan D."/>
            <person name="Tran K."/>
            <person name="Moazzez A."/>
            <person name="Utterback T.R."/>
            <person name="Rizzo M."/>
            <person name="Lee K."/>
            <person name="Kosack D."/>
            <person name="Moestl D."/>
            <person name="Wedler H."/>
            <person name="Lauber J."/>
            <person name="Stjepandic D."/>
            <person name="Hoheisel J."/>
            <person name="Straetz M."/>
            <person name="Heim S."/>
            <person name="Kiewitz C."/>
            <person name="Eisen J.A."/>
            <person name="Timmis K.N."/>
            <person name="Duesterhoeft A."/>
            <person name="Tuemmler B."/>
            <person name="Fraser C.M."/>
        </authorList>
    </citation>
    <scope>NUCLEOTIDE SEQUENCE [LARGE SCALE GENOMIC DNA]</scope>
    <source>
        <strain>ATCC 47054 / DSM 6125 / CFBP 8728 / NCIMB 11950 / KT2440</strain>
    </source>
</reference>
<proteinExistence type="inferred from homology"/>
<accession>Q88FN1</accession>
<protein>
    <recommendedName>
        <fullName evidence="1">1,4-alpha-glucan branching enzyme GlgB</fullName>
        <ecNumber evidence="1">2.4.1.18</ecNumber>
    </recommendedName>
    <alternativeName>
        <fullName evidence="1">1,4-alpha-D-glucan:1,4-alpha-D-glucan 6-glucosyl-transferase</fullName>
    </alternativeName>
    <alternativeName>
        <fullName evidence="1">Alpha-(1-&gt;4)-glucan branching enzyme</fullName>
    </alternativeName>
    <alternativeName>
        <fullName evidence="1">Glycogen branching enzyme</fullName>
        <shortName evidence="1">BE</shortName>
    </alternativeName>
</protein>
<name>GLGB_PSEPK</name>
<comment type="function">
    <text evidence="1">Catalyzes the formation of the alpha-1,6-glucosidic linkages in glycogen by scission of a 1,4-alpha-linked oligosaccharide from growing alpha-1,4-glucan chains and the subsequent attachment of the oligosaccharide to the alpha-1,6 position.</text>
</comment>
<comment type="catalytic activity">
    <reaction evidence="1">
        <text>Transfers a segment of a (1-&gt;4)-alpha-D-glucan chain to a primary hydroxy group in a similar glucan chain.</text>
        <dbReference type="EC" id="2.4.1.18"/>
    </reaction>
</comment>
<comment type="pathway">
    <text evidence="1">Glycan biosynthesis; glycogen biosynthesis.</text>
</comment>
<comment type="subunit">
    <text evidence="1">Monomer.</text>
</comment>
<comment type="similarity">
    <text evidence="1">Belongs to the glycosyl hydrolase 13 family. GlgB subfamily.</text>
</comment>
<sequence>MNVTTRENGGLRQRDLDALARAEHADPFAVLGPHGDGAGGQVVRAFLPNALKVRIQARDDGRVLAEMEQGSLPGLFSAHLDKAQPYQLHIVWAGGEQVTEDPYSFGPQLGDMDLHLFAEGNHRDLSGRFGAQPTQVDGIDGVCFSVWAPNARRVSVVGDFNNWDGRRHPMRLRHGAGVWELFIPRLGVGETYKFEVLGKDGILPLKADPLARATELPPSTASKVAGELSHAWQDHDWMAQRAQRHAYNAPLSIYELHPGSWRCELDEAGEIGRFYNWRELAERLVPYVQELGFTHIELLPIMEHPFGGSWGYQPLSMFAPTSRYGSAEDFAAFIDACHQGGIGVLLDWVPAHFPTDEHGLARFDGTALYEYDNPLEGYHQDWNTLIYNLGRNEVRGFMMASALHWLKHFHIDGLRVDAVASMLYRDYSRKAGEWVPNRHGGRENLEAIDFIRHLNGVAAHEAPGALIIAEESTAWPGVSQPTQQGGLGFAYKWNMGWMHDTLHYIQNDPVHRTYHHNEMSFGLIYAYSEHFILPISHDEVVHGKHSLIDKMPGDRWQKFANLRAYLTFMWAHPGKKLLFMGCEFGQWREWNHDAELDWYLLQYPEHQGVQRLVGDLNRLYREEPALHEQDCQPQGFQWLIGDDAQNSVYAWLRWSSSGEPVLVVANFTPVPREGYRIGVPFGERWQELLNSDAELYAGSNVGNLGAVASDEVASHGQPLSLALNLPPLGVLIMKPA</sequence>
<dbReference type="EC" id="2.4.1.18" evidence="1"/>
<dbReference type="EMBL" id="AE015451">
    <property type="protein sequence ID" value="AAN69648.1"/>
    <property type="molecule type" value="Genomic_DNA"/>
</dbReference>
<dbReference type="RefSeq" id="NP_746184.1">
    <property type="nucleotide sequence ID" value="NC_002947.4"/>
</dbReference>
<dbReference type="RefSeq" id="WP_010954852.1">
    <property type="nucleotide sequence ID" value="NZ_CP169744.1"/>
</dbReference>
<dbReference type="SMR" id="Q88FN1"/>
<dbReference type="STRING" id="160488.PP_4058"/>
<dbReference type="CAZy" id="CBM48">
    <property type="family name" value="Carbohydrate-Binding Module Family 48"/>
</dbReference>
<dbReference type="CAZy" id="GH13">
    <property type="family name" value="Glycoside Hydrolase Family 13"/>
</dbReference>
<dbReference type="PaxDb" id="160488-PP_4058"/>
<dbReference type="GeneID" id="83679243"/>
<dbReference type="KEGG" id="ppu:PP_4058"/>
<dbReference type="PATRIC" id="fig|160488.4.peg.4314"/>
<dbReference type="eggNOG" id="COG0296">
    <property type="taxonomic scope" value="Bacteria"/>
</dbReference>
<dbReference type="HOGENOM" id="CLU_004245_3_2_6"/>
<dbReference type="OrthoDB" id="9800174at2"/>
<dbReference type="PhylomeDB" id="Q88FN1"/>
<dbReference type="BioCyc" id="PPUT160488:G1G01-4323-MONOMER"/>
<dbReference type="UniPathway" id="UPA00164"/>
<dbReference type="Proteomes" id="UP000000556">
    <property type="component" value="Chromosome"/>
</dbReference>
<dbReference type="GO" id="GO:0005829">
    <property type="term" value="C:cytosol"/>
    <property type="evidence" value="ECO:0007669"/>
    <property type="project" value="TreeGrafter"/>
</dbReference>
<dbReference type="GO" id="GO:0003844">
    <property type="term" value="F:1,4-alpha-glucan branching enzyme activity"/>
    <property type="evidence" value="ECO:0007669"/>
    <property type="project" value="UniProtKB-UniRule"/>
</dbReference>
<dbReference type="GO" id="GO:0043169">
    <property type="term" value="F:cation binding"/>
    <property type="evidence" value="ECO:0007669"/>
    <property type="project" value="InterPro"/>
</dbReference>
<dbReference type="GO" id="GO:0004553">
    <property type="term" value="F:hydrolase activity, hydrolyzing O-glycosyl compounds"/>
    <property type="evidence" value="ECO:0007669"/>
    <property type="project" value="InterPro"/>
</dbReference>
<dbReference type="GO" id="GO:0005978">
    <property type="term" value="P:glycogen biosynthetic process"/>
    <property type="evidence" value="ECO:0007669"/>
    <property type="project" value="UniProtKB-UniRule"/>
</dbReference>
<dbReference type="CDD" id="cd11322">
    <property type="entry name" value="AmyAc_Glg_BE"/>
    <property type="match status" value="1"/>
</dbReference>
<dbReference type="CDD" id="cd02855">
    <property type="entry name" value="E_set_GBE_prok_N"/>
    <property type="match status" value="1"/>
</dbReference>
<dbReference type="FunFam" id="2.60.40.10:FF:000169">
    <property type="entry name" value="1,4-alpha-glucan branching enzyme GlgB"/>
    <property type="match status" value="1"/>
</dbReference>
<dbReference type="FunFam" id="2.60.40.1180:FF:000002">
    <property type="entry name" value="1,4-alpha-glucan branching enzyme GlgB"/>
    <property type="match status" value="1"/>
</dbReference>
<dbReference type="FunFam" id="3.20.20.80:FF:000003">
    <property type="entry name" value="1,4-alpha-glucan branching enzyme GlgB"/>
    <property type="match status" value="1"/>
</dbReference>
<dbReference type="Gene3D" id="3.20.20.80">
    <property type="entry name" value="Glycosidases"/>
    <property type="match status" value="1"/>
</dbReference>
<dbReference type="Gene3D" id="2.60.40.1180">
    <property type="entry name" value="Golgi alpha-mannosidase II"/>
    <property type="match status" value="1"/>
</dbReference>
<dbReference type="Gene3D" id="2.60.40.10">
    <property type="entry name" value="Immunoglobulins"/>
    <property type="match status" value="2"/>
</dbReference>
<dbReference type="HAMAP" id="MF_00685">
    <property type="entry name" value="GlgB"/>
    <property type="match status" value="1"/>
</dbReference>
<dbReference type="InterPro" id="IPR006048">
    <property type="entry name" value="A-amylase/branching_C"/>
</dbReference>
<dbReference type="InterPro" id="IPR037439">
    <property type="entry name" value="Branching_enzy"/>
</dbReference>
<dbReference type="InterPro" id="IPR006407">
    <property type="entry name" value="GlgB"/>
</dbReference>
<dbReference type="InterPro" id="IPR054169">
    <property type="entry name" value="GlgB_N"/>
</dbReference>
<dbReference type="InterPro" id="IPR044143">
    <property type="entry name" value="GlgB_N_E_set_prok"/>
</dbReference>
<dbReference type="InterPro" id="IPR006047">
    <property type="entry name" value="Glyco_hydro_13_cat_dom"/>
</dbReference>
<dbReference type="InterPro" id="IPR004193">
    <property type="entry name" value="Glyco_hydro_13_N"/>
</dbReference>
<dbReference type="InterPro" id="IPR013780">
    <property type="entry name" value="Glyco_hydro_b"/>
</dbReference>
<dbReference type="InterPro" id="IPR017853">
    <property type="entry name" value="Glycoside_hydrolase_SF"/>
</dbReference>
<dbReference type="InterPro" id="IPR013783">
    <property type="entry name" value="Ig-like_fold"/>
</dbReference>
<dbReference type="InterPro" id="IPR014756">
    <property type="entry name" value="Ig_E-set"/>
</dbReference>
<dbReference type="NCBIfam" id="TIGR01515">
    <property type="entry name" value="branching_enzym"/>
    <property type="match status" value="1"/>
</dbReference>
<dbReference type="NCBIfam" id="NF003811">
    <property type="entry name" value="PRK05402.1"/>
    <property type="match status" value="1"/>
</dbReference>
<dbReference type="NCBIfam" id="NF008967">
    <property type="entry name" value="PRK12313.1"/>
    <property type="match status" value="1"/>
</dbReference>
<dbReference type="PANTHER" id="PTHR43651">
    <property type="entry name" value="1,4-ALPHA-GLUCAN-BRANCHING ENZYME"/>
    <property type="match status" value="1"/>
</dbReference>
<dbReference type="PANTHER" id="PTHR43651:SF3">
    <property type="entry name" value="1,4-ALPHA-GLUCAN-BRANCHING ENZYME"/>
    <property type="match status" value="1"/>
</dbReference>
<dbReference type="Pfam" id="PF00128">
    <property type="entry name" value="Alpha-amylase"/>
    <property type="match status" value="1"/>
</dbReference>
<dbReference type="Pfam" id="PF02806">
    <property type="entry name" value="Alpha-amylase_C"/>
    <property type="match status" value="1"/>
</dbReference>
<dbReference type="Pfam" id="PF02922">
    <property type="entry name" value="CBM_48"/>
    <property type="match status" value="1"/>
</dbReference>
<dbReference type="Pfam" id="PF22019">
    <property type="entry name" value="GlgB_N"/>
    <property type="match status" value="1"/>
</dbReference>
<dbReference type="PIRSF" id="PIRSF000463">
    <property type="entry name" value="GlgB"/>
    <property type="match status" value="1"/>
</dbReference>
<dbReference type="SMART" id="SM00642">
    <property type="entry name" value="Aamy"/>
    <property type="match status" value="1"/>
</dbReference>
<dbReference type="SUPFAM" id="SSF51445">
    <property type="entry name" value="(Trans)glycosidases"/>
    <property type="match status" value="1"/>
</dbReference>
<dbReference type="SUPFAM" id="SSF81296">
    <property type="entry name" value="E set domains"/>
    <property type="match status" value="2"/>
</dbReference>
<dbReference type="SUPFAM" id="SSF51011">
    <property type="entry name" value="Glycosyl hydrolase domain"/>
    <property type="match status" value="1"/>
</dbReference>
<keyword id="KW-0119">Carbohydrate metabolism</keyword>
<keyword id="KW-0320">Glycogen biosynthesis</keyword>
<keyword id="KW-0321">Glycogen metabolism</keyword>
<keyword id="KW-0328">Glycosyltransferase</keyword>
<keyword id="KW-1185">Reference proteome</keyword>
<keyword id="KW-0808">Transferase</keyword>
<feature type="chain" id="PRO_0000188731" description="1,4-alpha-glucan branching enzyme GlgB">
    <location>
        <begin position="1"/>
        <end position="736"/>
    </location>
</feature>
<feature type="active site" description="Nucleophile" evidence="1">
    <location>
        <position position="417"/>
    </location>
</feature>
<feature type="active site" description="Proton donor" evidence="1">
    <location>
        <position position="470"/>
    </location>
</feature>
<organism>
    <name type="scientific">Pseudomonas putida (strain ATCC 47054 / DSM 6125 / CFBP 8728 / NCIMB 11950 / KT2440)</name>
    <dbReference type="NCBI Taxonomy" id="160488"/>
    <lineage>
        <taxon>Bacteria</taxon>
        <taxon>Pseudomonadati</taxon>
        <taxon>Pseudomonadota</taxon>
        <taxon>Gammaproteobacteria</taxon>
        <taxon>Pseudomonadales</taxon>
        <taxon>Pseudomonadaceae</taxon>
        <taxon>Pseudomonas</taxon>
    </lineage>
</organism>